<organism>
    <name type="scientific">Saccharomyces cerevisiae (strain ATCC 204508 / S288c)</name>
    <name type="common">Baker's yeast</name>
    <dbReference type="NCBI Taxonomy" id="559292"/>
    <lineage>
        <taxon>Eukaryota</taxon>
        <taxon>Fungi</taxon>
        <taxon>Dikarya</taxon>
        <taxon>Ascomycota</taxon>
        <taxon>Saccharomycotina</taxon>
        <taxon>Saccharomycetes</taxon>
        <taxon>Saccharomycetales</taxon>
        <taxon>Saccharomycetaceae</taxon>
        <taxon>Saccharomyces</taxon>
    </lineage>
</organism>
<feature type="chain" id="PRO_0000278985" description="Transposon Ty1-BL Gag-Pol polyprotein">
    <location>
        <begin position="1"/>
        <end position="1755"/>
    </location>
</feature>
<feature type="chain" id="PRO_0000278986" description="Capsid protein" evidence="1">
    <location>
        <begin position="1"/>
        <end position="401"/>
    </location>
</feature>
<feature type="chain" id="PRO_0000278987" description="Ty1 protease" evidence="1">
    <location>
        <begin position="402"/>
        <end position="582"/>
    </location>
</feature>
<feature type="chain" id="PRO_0000278988" description="Integrase" evidence="1">
    <location>
        <begin position="583"/>
        <end position="1217"/>
    </location>
</feature>
<feature type="chain" id="PRO_0000278989" description="Reverse transcriptase/ribonuclease H" evidence="1">
    <location>
        <begin position="1218"/>
        <end position="1755"/>
    </location>
</feature>
<feature type="domain" description="Integrase catalytic" evidence="2">
    <location>
        <begin position="660"/>
        <end position="835"/>
    </location>
</feature>
<feature type="domain" description="Reverse transcriptase Ty1/copia-type">
    <location>
        <begin position="1338"/>
        <end position="1476"/>
    </location>
</feature>
<feature type="domain" description="RNase H Ty1/copia-type">
    <location>
        <begin position="1610"/>
        <end position="1752"/>
    </location>
</feature>
<feature type="region of interest" description="Disordered" evidence="4">
    <location>
        <begin position="20"/>
        <end position="84"/>
    </location>
</feature>
<feature type="region of interest" description="Disordered" evidence="4">
    <location>
        <begin position="137"/>
        <end position="173"/>
    </location>
</feature>
<feature type="region of interest" description="RNA-binding" evidence="1">
    <location>
        <begin position="299"/>
        <end position="401"/>
    </location>
</feature>
<feature type="region of interest" description="Disordered" evidence="4">
    <location>
        <begin position="350"/>
        <end position="420"/>
    </location>
</feature>
<feature type="region of interest" description="Integrase-type zinc finger-like">
    <location>
        <begin position="583"/>
        <end position="640"/>
    </location>
</feature>
<feature type="region of interest" description="Disordered" evidence="4">
    <location>
        <begin position="956"/>
        <end position="1172"/>
    </location>
</feature>
<feature type="short sequence motif" description="Bipartite nuclear localization signal" evidence="1">
    <location>
        <begin position="1178"/>
        <end position="1212"/>
    </location>
</feature>
<feature type="compositionally biased region" description="Polar residues" evidence="4">
    <location>
        <begin position="20"/>
        <end position="31"/>
    </location>
</feature>
<feature type="compositionally biased region" description="Polar residues" evidence="4">
    <location>
        <begin position="46"/>
        <end position="55"/>
    </location>
</feature>
<feature type="compositionally biased region" description="Polar residues" evidence="4">
    <location>
        <begin position="137"/>
        <end position="168"/>
    </location>
</feature>
<feature type="compositionally biased region" description="Basic and acidic residues" evidence="4">
    <location>
        <begin position="363"/>
        <end position="372"/>
    </location>
</feature>
<feature type="compositionally biased region" description="Polar residues" evidence="4">
    <location>
        <begin position="373"/>
        <end position="411"/>
    </location>
</feature>
<feature type="compositionally biased region" description="Low complexity" evidence="4">
    <location>
        <begin position="960"/>
        <end position="969"/>
    </location>
</feature>
<feature type="compositionally biased region" description="Polar residues" evidence="4">
    <location>
        <begin position="1005"/>
        <end position="1017"/>
    </location>
</feature>
<feature type="compositionally biased region" description="Polar residues" evidence="4">
    <location>
        <begin position="1031"/>
        <end position="1043"/>
    </location>
</feature>
<feature type="compositionally biased region" description="Basic and acidic residues" evidence="4">
    <location>
        <begin position="1044"/>
        <end position="1053"/>
    </location>
</feature>
<feature type="compositionally biased region" description="Polar residues" evidence="4">
    <location>
        <begin position="1054"/>
        <end position="1082"/>
    </location>
</feature>
<feature type="compositionally biased region" description="Polar residues" evidence="4">
    <location>
        <begin position="1095"/>
        <end position="1106"/>
    </location>
</feature>
<feature type="active site" description="For protease activity; shared with dimeric partner" evidence="3">
    <location>
        <position position="461"/>
    </location>
</feature>
<feature type="binding site" evidence="2">
    <location>
        <position position="671"/>
    </location>
    <ligand>
        <name>Mg(2+)</name>
        <dbReference type="ChEBI" id="CHEBI:18420"/>
        <label>1</label>
        <note>catalytic; for integrase activity</note>
    </ligand>
</feature>
<feature type="binding site" evidence="2">
    <location>
        <position position="736"/>
    </location>
    <ligand>
        <name>Mg(2+)</name>
        <dbReference type="ChEBI" id="CHEBI:18420"/>
        <label>1</label>
        <note>catalytic; for integrase activity</note>
    </ligand>
</feature>
<feature type="binding site" evidence="2">
    <location>
        <position position="1346"/>
    </location>
    <ligand>
        <name>Mg(2+)</name>
        <dbReference type="ChEBI" id="CHEBI:18420"/>
        <label>2</label>
        <note>catalytic; for reverse transcriptase activity</note>
    </ligand>
</feature>
<feature type="binding site" evidence="2">
    <location>
        <position position="1427"/>
    </location>
    <ligand>
        <name>Mg(2+)</name>
        <dbReference type="ChEBI" id="CHEBI:18420"/>
        <label>2</label>
        <note>catalytic; for reverse transcriptase activity</note>
    </ligand>
</feature>
<feature type="binding site" evidence="2">
    <location>
        <position position="1428"/>
    </location>
    <ligand>
        <name>Mg(2+)</name>
        <dbReference type="ChEBI" id="CHEBI:18420"/>
        <label>2</label>
        <note>catalytic; for reverse transcriptase activity</note>
    </ligand>
</feature>
<feature type="binding site" evidence="2">
    <location>
        <position position="1610"/>
    </location>
    <ligand>
        <name>Mg(2+)</name>
        <dbReference type="ChEBI" id="CHEBI:18420"/>
        <label>3</label>
        <note>catalytic; for RNase H activity</note>
    </ligand>
</feature>
<feature type="binding site" evidence="2">
    <location>
        <position position="1652"/>
    </location>
    <ligand>
        <name>Mg(2+)</name>
        <dbReference type="ChEBI" id="CHEBI:18420"/>
        <label>3</label>
        <note>catalytic; for RNase H activity</note>
    </ligand>
</feature>
<feature type="binding site" evidence="2">
    <location>
        <position position="1685"/>
    </location>
    <ligand>
        <name>Mg(2+)</name>
        <dbReference type="ChEBI" id="CHEBI:18420"/>
        <label>3</label>
        <note>catalytic; for RNase H activity</note>
    </ligand>
</feature>
<feature type="site" description="Cleavage; by Ty1 protease" evidence="1">
    <location>
        <begin position="401"/>
        <end position="402"/>
    </location>
</feature>
<feature type="site" description="Cleavage; by Ty1 protease" evidence="1">
    <location>
        <begin position="582"/>
        <end position="583"/>
    </location>
</feature>
<feature type="site" description="Cleavage; by Ty1 protease" evidence="1">
    <location>
        <begin position="1217"/>
        <end position="1218"/>
    </location>
</feature>
<evidence type="ECO:0000250" key="1"/>
<evidence type="ECO:0000255" key="2">
    <source>
        <dbReference type="PROSITE-ProRule" id="PRU00457"/>
    </source>
</evidence>
<evidence type="ECO:0000255" key="3">
    <source>
        <dbReference type="PROSITE-ProRule" id="PRU10094"/>
    </source>
</evidence>
<evidence type="ECO:0000256" key="4">
    <source>
        <dbReference type="SAM" id="MobiDB-lite"/>
    </source>
</evidence>
<comment type="function">
    <text evidence="1">Capsid protein (CA) is the structural component of the virus-like particle (VLP), forming the shell that encapsulates the retrotransposons dimeric RNA genome. The particles are assembled from trimer-clustered units and there are holes in the capsid shells that allow for the diffusion of macromolecules. CA also has nucleocapsid-like chaperone activity, promoting primer tRNA(i)-Met annealing to the multipartite primer-binding site (PBS), dimerization of Ty1 RNA and initiation of reverse transcription (By similarity).</text>
</comment>
<comment type="function">
    <text evidence="1">The aspartyl protease (PR) mediates the proteolytic cleavages of the Gag and Gag-Pol polyproteins after assembly of the VLP.</text>
</comment>
<comment type="function">
    <text evidence="1">Reverse transcriptase/ribonuclease H (RT) is a multifunctional enzyme that catalyzes the conversion of the retro-elements RNA genome into dsDNA within the VLP. The enzyme displays a DNA polymerase activity that can copy either DNA or RNA templates, and a ribonuclease H (RNase H) activity that cleaves the RNA strand of RNA-DNA heteroduplexes during plus-strand synthesis and hydrolyzes RNA primers. The conversion leads to a linear dsDNA copy of the retrotransposon that includes long terminal repeats (LTRs) at both ends (By similarity).</text>
</comment>
<comment type="function">
    <text evidence="1">Integrase (IN) targets the VLP to the nucleus, where a subparticle preintegration complex (PIC) containing at least integrase and the newly synthesized dsDNA copy of the retrotransposon must transit the nuclear membrane. Once in the nucleus, integrase performs the integration of the dsDNA into the host genome (By similarity).</text>
</comment>
<comment type="catalytic activity">
    <reaction>
        <text>DNA(n) + a 2'-deoxyribonucleoside 5'-triphosphate = DNA(n+1) + diphosphate</text>
        <dbReference type="Rhea" id="RHEA:22508"/>
        <dbReference type="Rhea" id="RHEA-COMP:17339"/>
        <dbReference type="Rhea" id="RHEA-COMP:17340"/>
        <dbReference type="ChEBI" id="CHEBI:33019"/>
        <dbReference type="ChEBI" id="CHEBI:61560"/>
        <dbReference type="ChEBI" id="CHEBI:173112"/>
        <dbReference type="EC" id="2.7.7.49"/>
    </reaction>
</comment>
<comment type="catalytic activity">
    <reaction>
        <text>DNA(n) + a 2'-deoxyribonucleoside 5'-triphosphate = DNA(n+1) + diphosphate</text>
        <dbReference type="Rhea" id="RHEA:22508"/>
        <dbReference type="Rhea" id="RHEA-COMP:17339"/>
        <dbReference type="Rhea" id="RHEA-COMP:17340"/>
        <dbReference type="ChEBI" id="CHEBI:33019"/>
        <dbReference type="ChEBI" id="CHEBI:61560"/>
        <dbReference type="ChEBI" id="CHEBI:173112"/>
        <dbReference type="EC" id="2.7.7.7"/>
    </reaction>
</comment>
<comment type="catalytic activity">
    <reaction>
        <text>Endonucleolytic cleavage to 5'-phosphomonoester.</text>
        <dbReference type="EC" id="3.1.26.4"/>
    </reaction>
</comment>
<comment type="subunit">
    <text evidence="1">The capsid protein forms a homotrimer, from which the VLPs are assembled. The protease is a homodimer, whose active site consists of two apposed aspartic acid residues (By similarity).</text>
</comment>
<comment type="subcellular location">
    <subcellularLocation>
        <location>Cytoplasm</location>
    </subcellularLocation>
    <subcellularLocation>
        <location evidence="1">Nucleus</location>
    </subcellularLocation>
</comment>
<comment type="alternative products">
    <event type="ribosomal frameshifting"/>
    <isoform>
        <id>Q12490-1</id>
        <name>Transposon Ty1-BL Gag-Pol polyprotein</name>
        <sequence type="displayed"/>
    </isoform>
    <isoform>
        <id>Q12266-1</id>
        <name>Transposon Ty1-BL Gag polyprotein</name>
        <sequence type="external"/>
    </isoform>
    <text evidence="1">The Gag-Pol polyprotein is generated by a +1 ribosomal frameshift. The ratio of Gag:Gag-Pol varies between 20:1 and 5:1 (By similarity).</text>
</comment>
<comment type="domain">
    <text evidence="1">The C-terminal RNA-binding region of CA is sufficient for all its nucleocapsid-like chaperone activities.</text>
</comment>
<comment type="domain">
    <text evidence="1">Integrase core domain contains the D-x(n)-D-x(35)-E motif, named for the phylogenetically conserved glutamic acid and aspartic acid residues and the invariant 35 amino acid spacing between the second and third acidic residues. Each acidic residue of the D,D(35)E motif is independently essential for the 3'-processing and strand transfer activities of purified integrase protein (By similarity).</text>
</comment>
<comment type="PTM">
    <text evidence="1">Initially, virus-like particles (VLPs) are composed of the structural unprocessed proteins Gag and Gag-Pol, and also contain the host initiator methionine tRNA (tRNA(i)-Met) which serves as a primer for minus-strand DNA synthesis, and a dimer of genomic Ty RNA. Processing of the polyproteins occurs within the particle and proceeds by an ordered pathway, called maturation. First, the protease (PR) is released by autocatalytic cleavage of the Gag-Pol polyprotein yielding capsid protein p45 and a Pol-p154 precursor protein. This cleavage is a prerequisite for subsequent processing of Pol-p154 at the remaining sites to release the mature structural and catalytic proteins. Maturation takes place prior to the RT reaction and is required to produce transposition-competent VLPs (By similarity).</text>
</comment>
<comment type="miscellaneous">
    <text>Retrotransposons are mobile genetic entities that are able to replicate via an RNA intermediate and a reverse transcription step. In contrast to retroviruses, retrotransposons are non-infectious, lack an envelope and remain intracellular. Ty1 retrotransposons belong to the copia elements (pseudoviridae).</text>
</comment>
<comment type="miscellaneous">
    <molecule>Isoform Transposon Ty1-BL Gag-Pol polyprotein</molecule>
    <text>Produced by +1 ribosomal frameshifting between codon Leu-435 and Gly-436 of the YBL005W-A ORF.</text>
</comment>
<protein>
    <recommendedName>
        <fullName>Transposon Ty1-BL Gag-Pol polyprotein</fullName>
    </recommendedName>
    <alternativeName>
        <fullName>Gag-Pol-p199</fullName>
    </alternativeName>
    <alternativeName>
        <fullName>TY1A-TY1B</fullName>
    </alternativeName>
    <alternativeName>
        <fullName>Transposon Ty1 TYA-TYB polyprotein</fullName>
    </alternativeName>
    <alternativeName>
        <fullName>p190</fullName>
    </alternativeName>
    <component>
        <recommendedName>
            <fullName>Capsid protein</fullName>
            <shortName>CA</shortName>
        </recommendedName>
        <alternativeName>
            <fullName>Gag-p45</fullName>
        </alternativeName>
        <alternativeName>
            <fullName>p54</fullName>
        </alternativeName>
    </component>
    <component>
        <recommendedName>
            <fullName>Ty1 protease</fullName>
            <shortName>PR</shortName>
            <ecNumber>3.4.23.-</ecNumber>
        </recommendedName>
        <alternativeName>
            <fullName>Pol-p20</fullName>
        </alternativeName>
        <alternativeName>
            <fullName>p23</fullName>
        </alternativeName>
    </component>
    <component>
        <recommendedName>
            <fullName>Integrase</fullName>
            <shortName>IN</shortName>
        </recommendedName>
        <alternativeName>
            <fullName>Pol-p71</fullName>
        </alternativeName>
        <alternativeName>
            <fullName>p84</fullName>
        </alternativeName>
        <alternativeName>
            <fullName>p90</fullName>
        </alternativeName>
    </component>
    <component>
        <recommendedName>
            <fullName>Reverse transcriptase/ribonuclease H</fullName>
            <shortName>RT</shortName>
            <shortName>RT-RH</shortName>
            <ecNumber>2.7.7.49</ecNumber>
            <ecNumber>2.7.7.7</ecNumber>
            <ecNumber>3.1.26.4</ecNumber>
        </recommendedName>
        <alternativeName>
            <fullName>Pol-p63</fullName>
        </alternativeName>
        <alternativeName>
            <fullName>p60</fullName>
        </alternativeName>
    </component>
</protein>
<sequence>MESQQLSQHSPIFHGSACASVTSKEVQTTQDPLDISASKTEECEKVSTQANSQQPTTPPSSAVPENHHHASPQAAQVPLPQNGPYPQQRMMNTQQANISGWPVYGHPSLMPYPPYQMSPMYAPPGAQSQFTQYPQYVGTHLNTPSPESGNSFPDSSSAKSNMTSTNQHVRPPPILTSPNDFLNWVKIYIKFLQNSNLGDIIPTATRKAVRQMTDDELTFLCHTFQLFAPSQFLPPWVKDILSVDYTDIMKILSKSINKMQSDTQEVNDITTLATLHYNGSTPADAFEAEVTNILDRLNNNGIPINNKVACQFIMRGLSGEYKFLPYARHRCIHMTVADLFSDIHSMYEEQQESKRNKSTYRRSPSDEKKDSRTYTNTTKPKSITRNSQKPNNSQSRTARAHNVSTFNNSPGPDNDLIRGSTTEPIQLKNTHDLHLGQELTESTVNHTNHSDDELPGHLLLDSGASRTLIRSAHHIHSASSNPDINVVDAQKRNIPINAIGDLQFHFQDNTKTSIKVLHTPNIAYDLLSLNELAAVDITACFTKNVLERSDGTVLAPIVKYGDFYWVSKKYLLPSNISVPTINNVHTSESTRKYPYPFIHRMLAHANAQTIRYSLKNNTITYFNESDVDWSSAIDYQCPDCLIGKSTKHRHIKGSRLKYQNSYEPFQYLHTDIFGPVHNLPKSAPSYFISFTDETTKFRWVYPLHDRREDSILDVFTTILAFIKNQFQASVLVIQMDRGSEYTNRTLHKFLEKNGITPCYTTTADSRAHGVAERLNRTLLDDCRTQLQCSGLPNHLWFSAIEFSTIVRNSLASPKSKKSARQHAGLAGLDISTLLPFGQPVIVNDHNPNSKIHPRGIPGYALHPSRNSYGYIIYLPSLKKTVDTTNYVILQGKESRLDQFNYDALTFDEDLNRLTASYQSFIASNEIQQSNDLNIESDHDFQSDIELYPEQPRNVLSKAVSPTDSTPPSTHTEDSKRVSKTNIRAPREVDPNISESNILPSKKRSSTPQISDIESTDSGGMHRLDVPLLAPMSQSNTHESSYASKSKDFRHSDSYSDNETNHTNVPISSTGGTNNKTVPQTSEQETEKRIIHRSPSIDTSSSESNSLHHVVPIKTSDTCPKENTEESIIADLPLPDLPPEPPTELSDSFKELPPINSRQTNSSLGGIGDSNAYTTINSKKRSLEDNETEIKVSRDTWNTKNMRSLEPPRSKKRIHLIAAVKAVKSIKPIRTTLRYDEAITYNKDIKEKEKYIEAYHKEVNQLLKMKTWDTDKYYDRKEIDPKRVINSMFIFNRKRDGTHKARFVARGDIQHPDTYDSGMQSNTVHHYALMTSLSLALDNNYHITQLDISSAYLYADIKEELYIRPPPHLGMNDKLIRLKKSLYGLKQSGANWYETIKSYLIKQCGMEEVRGWSCVFKNSQVTICLFVDDMVLFSKNLNSNKRIIDKLKMQYDTKIINLGESDEEIQYDILGLEIKYQRGKYMKLGMENSLTEKIPKLNVPLNPKGRKLSAPGQPGLYIDQQELELEEDDYKMKVHEMQKLIGLASYVGYKFRFDLLYYINTLAQHILFPSKQVLDMTYELIQFIWNTRDKQLIWHKSKPVKPTNKLVVISDASYGNQPYYKSQIGNIYLLNGKVIGGKSTKASLTCTSTTEAEIHAISESVPLLNNLSYLIQELDKKPITKGLLTDSKSTISIIISNNEEKFRNRFFGTKAMRLRDEVSGNHLHVCYIETKKNIADVMTKPLPIKTFKLLTNKWIH</sequence>
<name>YB11B_YEAST</name>
<keyword id="KW-0064">Aspartyl protease</keyword>
<keyword id="KW-0067">ATP-binding</keyword>
<keyword id="KW-0963">Cytoplasm</keyword>
<keyword id="KW-0229">DNA integration</keyword>
<keyword id="KW-0233">DNA recombination</keyword>
<keyword id="KW-0238">DNA-binding</keyword>
<keyword id="KW-0239">DNA-directed DNA polymerase</keyword>
<keyword id="KW-0255">Endonuclease</keyword>
<keyword id="KW-0378">Hydrolase</keyword>
<keyword id="KW-0460">Magnesium</keyword>
<keyword id="KW-0479">Metal-binding</keyword>
<keyword id="KW-0511">Multifunctional enzyme</keyword>
<keyword id="KW-0540">Nuclease</keyword>
<keyword id="KW-0547">Nucleotide-binding</keyword>
<keyword id="KW-0548">Nucleotidyltransferase</keyword>
<keyword id="KW-0539">Nucleus</keyword>
<keyword id="KW-0645">Protease</keyword>
<keyword id="KW-1185">Reference proteome</keyword>
<keyword id="KW-0688">Ribosomal frameshifting</keyword>
<keyword id="KW-0694">RNA-binding</keyword>
<keyword id="KW-0695">RNA-directed DNA polymerase</keyword>
<keyword id="KW-0808">Transferase</keyword>
<keyword id="KW-0814">Transposable element</keyword>
<keyword id="KW-0815">Transposition</keyword>
<keyword id="KW-1188">Viral release from host cell</keyword>
<keyword id="KW-0917">Virion maturation</keyword>
<keyword id="KW-0862">Zinc</keyword>
<keyword id="KW-0863">Zinc-finger</keyword>
<proteinExistence type="evidence at protein level"/>
<reference key="1">
    <citation type="journal article" date="1994" name="EMBO J.">
        <title>Complete DNA sequence of yeast chromosome II.</title>
        <authorList>
            <person name="Feldmann H."/>
            <person name="Aigle M."/>
            <person name="Aljinovic G."/>
            <person name="Andre B."/>
            <person name="Baclet M.C."/>
            <person name="Barthe C."/>
            <person name="Baur A."/>
            <person name="Becam A.-M."/>
            <person name="Biteau N."/>
            <person name="Boles E."/>
            <person name="Brandt T."/>
            <person name="Brendel M."/>
            <person name="Brueckner M."/>
            <person name="Bussereau F."/>
            <person name="Christiansen C."/>
            <person name="Contreras R."/>
            <person name="Crouzet M."/>
            <person name="Cziepluch C."/>
            <person name="Demolis N."/>
            <person name="Delaveau T."/>
            <person name="Doignon F."/>
            <person name="Domdey H."/>
            <person name="Duesterhus S."/>
            <person name="Dubois E."/>
            <person name="Dujon B."/>
            <person name="El Bakkoury M."/>
            <person name="Entian K.-D."/>
            <person name="Feuermann M."/>
            <person name="Fiers W."/>
            <person name="Fobo G.M."/>
            <person name="Fritz C."/>
            <person name="Gassenhuber J."/>
            <person name="Glansdorff N."/>
            <person name="Goffeau A."/>
            <person name="Grivell L.A."/>
            <person name="de Haan M."/>
            <person name="Hein C."/>
            <person name="Herbert C.J."/>
            <person name="Hollenberg C.P."/>
            <person name="Holmstroem K."/>
            <person name="Jacq C."/>
            <person name="Jacquet M."/>
            <person name="Jauniaux J.-C."/>
            <person name="Jonniaux J.-L."/>
            <person name="Kallesoee T."/>
            <person name="Kiesau P."/>
            <person name="Kirchrath L."/>
            <person name="Koetter P."/>
            <person name="Korol S."/>
            <person name="Liebl S."/>
            <person name="Logghe M."/>
            <person name="Lohan A.J.E."/>
            <person name="Louis E.J."/>
            <person name="Li Z.Y."/>
            <person name="Maat M.J."/>
            <person name="Mallet L."/>
            <person name="Mannhaupt G."/>
            <person name="Messenguy F."/>
            <person name="Miosga T."/>
            <person name="Molemans F."/>
            <person name="Mueller S."/>
            <person name="Nasr F."/>
            <person name="Obermaier B."/>
            <person name="Perea J."/>
            <person name="Pierard A."/>
            <person name="Piravandi E."/>
            <person name="Pohl F.M."/>
            <person name="Pohl T.M."/>
            <person name="Potier S."/>
            <person name="Proft M."/>
            <person name="Purnelle B."/>
            <person name="Ramezani Rad M."/>
            <person name="Rieger M."/>
            <person name="Rose M."/>
            <person name="Schaaff-Gerstenschlaeger I."/>
            <person name="Scherens B."/>
            <person name="Schwarzlose C."/>
            <person name="Skala J."/>
            <person name="Slonimski P.P."/>
            <person name="Smits P.H.M."/>
            <person name="Souciet J.-L."/>
            <person name="Steensma H.Y."/>
            <person name="Stucka R."/>
            <person name="Urrestarazu L.A."/>
            <person name="van der Aart Q.J.M."/>
            <person name="Van Dyck L."/>
            <person name="Vassarotti A."/>
            <person name="Vetter I."/>
            <person name="Vierendeels F."/>
            <person name="Vissers S."/>
            <person name="Wagner G."/>
            <person name="de Wergifosse P."/>
            <person name="Wolfe K.H."/>
            <person name="Zagulski M."/>
            <person name="Zimmermann F.K."/>
            <person name="Mewes H.-W."/>
            <person name="Kleine K."/>
        </authorList>
    </citation>
    <scope>NUCLEOTIDE SEQUENCE [LARGE SCALE GENOMIC DNA]</scope>
    <source>
        <strain>ATCC 204508 / S288c</strain>
    </source>
</reference>
<reference key="2">
    <citation type="journal article" date="2014" name="G3 (Bethesda)">
        <title>The reference genome sequence of Saccharomyces cerevisiae: Then and now.</title>
        <authorList>
            <person name="Engel S.R."/>
            <person name="Dietrich F.S."/>
            <person name="Fisk D.G."/>
            <person name="Binkley G."/>
            <person name="Balakrishnan R."/>
            <person name="Costanzo M.C."/>
            <person name="Dwight S.S."/>
            <person name="Hitz B.C."/>
            <person name="Karra K."/>
            <person name="Nash R.S."/>
            <person name="Weng S."/>
            <person name="Wong E.D."/>
            <person name="Lloyd P."/>
            <person name="Skrzypek M.S."/>
            <person name="Miyasato S.R."/>
            <person name="Simison M."/>
            <person name="Cherry J.M."/>
        </authorList>
    </citation>
    <scope>GENOME REANNOTATION</scope>
    <source>
        <strain>ATCC 204508 / S288c</strain>
    </source>
</reference>
<reference key="3">
    <citation type="journal article" date="1998" name="Genome Res.">
        <title>Transposable elements and genome organization: a comprehensive survey of retrotransposons revealed by the complete Saccharomyces cerevisiae genome sequence.</title>
        <authorList>
            <person name="Kim J.M."/>
            <person name="Vanguri S."/>
            <person name="Boeke J.D."/>
            <person name="Gabriel A."/>
            <person name="Voytas D.F."/>
        </authorList>
    </citation>
    <scope>NOMENCLATURE</scope>
</reference>
<reference key="4">
    <citation type="journal article" date="2005" name="Cytogenet. Genome Res.">
        <title>Happy together: the life and times of Ty retrotransposons and their hosts.</title>
        <authorList>
            <person name="Lesage P."/>
            <person name="Todeschini A.L."/>
        </authorList>
    </citation>
    <scope>REVIEW</scope>
</reference>
<reference key="5">
    <citation type="journal article" date="2005" name="Cytogenet. Genome Res.">
        <title>Reverse transcriptase and integrase of the Saccharomyces cerevisiae Ty1 element.</title>
        <authorList>
            <person name="Wilhelm F.-X."/>
            <person name="Wilhelm M."/>
            <person name="Gabriel A."/>
        </authorList>
    </citation>
    <scope>REVIEW</scope>
    <scope>DOMAINS</scope>
</reference>
<reference key="6">
    <citation type="journal article" date="2007" name="J. Proteome Res.">
        <title>Large-scale phosphorylation analysis of alpha-factor-arrested Saccharomyces cerevisiae.</title>
        <authorList>
            <person name="Li X."/>
            <person name="Gerber S.A."/>
            <person name="Rudner A.D."/>
            <person name="Beausoleil S.A."/>
            <person name="Haas W."/>
            <person name="Villen J."/>
            <person name="Elias J.E."/>
            <person name="Gygi S.P."/>
        </authorList>
    </citation>
    <scope>IDENTIFICATION BY MASS SPECTROMETRY [LARGE SCALE ANALYSIS]</scope>
    <source>
        <strain>ADR376</strain>
    </source>
</reference>
<reference key="7">
    <citation type="journal article" date="2008" name="Mol. Cell. Proteomics">
        <title>A multidimensional chromatography technology for in-depth phosphoproteome analysis.</title>
        <authorList>
            <person name="Albuquerque C.P."/>
            <person name="Smolka M.B."/>
            <person name="Payne S.H."/>
            <person name="Bafna V."/>
            <person name="Eng J."/>
            <person name="Zhou H."/>
        </authorList>
    </citation>
    <scope>IDENTIFICATION BY MASS SPECTROMETRY [LARGE SCALE ANALYSIS]</scope>
</reference>
<reference key="8">
    <citation type="journal article" date="2009" name="Science">
        <title>Global analysis of Cdk1 substrate phosphorylation sites provides insights into evolution.</title>
        <authorList>
            <person name="Holt L.J."/>
            <person name="Tuch B.B."/>
            <person name="Villen J."/>
            <person name="Johnson A.D."/>
            <person name="Gygi S.P."/>
            <person name="Morgan D.O."/>
        </authorList>
    </citation>
    <scope>IDENTIFICATION BY MASS SPECTROMETRY [LARGE SCALE ANALYSIS]</scope>
</reference>
<gene>
    <name type="primary">TY1B-BL</name>
    <name type="synonym">YBLWTy1-1 POL</name>
    <name type="ordered locus">YBL005W-B</name>
    <name type="ORF">YBL004W-A</name>
    <name type="ORF">YBL0325</name>
</gene>
<dbReference type="EC" id="3.4.23.-"/>
<dbReference type="EC" id="2.7.7.49"/>
<dbReference type="EC" id="2.7.7.7"/>
<dbReference type="EC" id="3.1.26.4"/>
<dbReference type="EMBL" id="Z35765">
    <property type="protein sequence ID" value="CAA84820.1"/>
    <property type="molecule type" value="Genomic_DNA"/>
</dbReference>
<dbReference type="EMBL" id="Z35766">
    <property type="protein sequence ID" value="CAA84824.1"/>
    <property type="molecule type" value="Genomic_DNA"/>
</dbReference>
<dbReference type="EMBL" id="BK006936">
    <property type="protein sequence ID" value="DAA07116.1"/>
    <property type="molecule type" value="Genomic_DNA"/>
</dbReference>
<dbReference type="PIR" id="S40969">
    <property type="entry name" value="S40969"/>
</dbReference>
<dbReference type="PIR" id="S45736">
    <property type="entry name" value="S45736"/>
</dbReference>
<dbReference type="RefSeq" id="NP_009549.1">
    <molecule id="Q12490-1"/>
    <property type="nucleotide sequence ID" value="NM_001180048.2"/>
</dbReference>
<dbReference type="BioGRID" id="32696">
    <property type="interactions" value="22"/>
</dbReference>
<dbReference type="FunCoup" id="Q12490">
    <property type="interactions" value="66"/>
</dbReference>
<dbReference type="IntAct" id="Q12490">
    <property type="interactions" value="14"/>
</dbReference>
<dbReference type="MINT" id="Q12490"/>
<dbReference type="GlyGen" id="Q12490">
    <property type="glycosylation" value="2 sites"/>
</dbReference>
<dbReference type="iPTMnet" id="Q12490"/>
<dbReference type="PaxDb" id="4932-YBL005W-B"/>
<dbReference type="PeptideAtlas" id="Q12490"/>
<dbReference type="GeneID" id="852280"/>
<dbReference type="KEGG" id="sce:YBL005W-B"/>
<dbReference type="AGR" id="SGD:S000002147"/>
<dbReference type="SGD" id="S000002147">
    <property type="gene designation" value="YBL005W-B"/>
</dbReference>
<dbReference type="VEuPathDB" id="FungiDB:YBL005W-B"/>
<dbReference type="eggNOG" id="KOG0017">
    <property type="taxonomic scope" value="Eukaryota"/>
</dbReference>
<dbReference type="HOGENOM" id="CLU_244151_0_0_1"/>
<dbReference type="InParanoid" id="Q12490"/>
<dbReference type="OrthoDB" id="5423336at2759"/>
<dbReference type="ChiTaRS" id="YBL005W-B">
    <property type="organism name" value="yeast"/>
</dbReference>
<dbReference type="Proteomes" id="UP000002311">
    <property type="component" value="Chromosome II"/>
</dbReference>
<dbReference type="RNAct" id="Q12490">
    <property type="molecule type" value="protein"/>
</dbReference>
<dbReference type="GO" id="GO:0005737">
    <property type="term" value="C:cytoplasm"/>
    <property type="evidence" value="ECO:0007669"/>
    <property type="project" value="UniProtKB-SubCell"/>
</dbReference>
<dbReference type="GO" id="GO:0005634">
    <property type="term" value="C:nucleus"/>
    <property type="evidence" value="ECO:0000314"/>
    <property type="project" value="SGD"/>
</dbReference>
<dbReference type="GO" id="GO:0004190">
    <property type="term" value="F:aspartic-type endopeptidase activity"/>
    <property type="evidence" value="ECO:0007669"/>
    <property type="project" value="UniProtKB-KW"/>
</dbReference>
<dbReference type="GO" id="GO:0005524">
    <property type="term" value="F:ATP binding"/>
    <property type="evidence" value="ECO:0007669"/>
    <property type="project" value="UniProtKB-KW"/>
</dbReference>
<dbReference type="GO" id="GO:0003677">
    <property type="term" value="F:DNA binding"/>
    <property type="evidence" value="ECO:0007669"/>
    <property type="project" value="UniProtKB-KW"/>
</dbReference>
<dbReference type="GO" id="GO:0003887">
    <property type="term" value="F:DNA-directed DNA polymerase activity"/>
    <property type="evidence" value="ECO:0007669"/>
    <property type="project" value="UniProtKB-KW"/>
</dbReference>
<dbReference type="GO" id="GO:0003723">
    <property type="term" value="F:RNA binding"/>
    <property type="evidence" value="ECO:0007669"/>
    <property type="project" value="UniProtKB-KW"/>
</dbReference>
<dbReference type="GO" id="GO:0003964">
    <property type="term" value="F:RNA-directed DNA polymerase activity"/>
    <property type="evidence" value="ECO:0007669"/>
    <property type="project" value="UniProtKB-KW"/>
</dbReference>
<dbReference type="GO" id="GO:0004523">
    <property type="term" value="F:RNA-DNA hybrid ribonuclease activity"/>
    <property type="evidence" value="ECO:0007669"/>
    <property type="project" value="UniProtKB-EC"/>
</dbReference>
<dbReference type="GO" id="GO:0008270">
    <property type="term" value="F:zinc ion binding"/>
    <property type="evidence" value="ECO:0007669"/>
    <property type="project" value="UniProtKB-KW"/>
</dbReference>
<dbReference type="GO" id="GO:0015074">
    <property type="term" value="P:DNA integration"/>
    <property type="evidence" value="ECO:0007669"/>
    <property type="project" value="UniProtKB-KW"/>
</dbReference>
<dbReference type="GO" id="GO:0006310">
    <property type="term" value="P:DNA recombination"/>
    <property type="evidence" value="ECO:0007669"/>
    <property type="project" value="UniProtKB-KW"/>
</dbReference>
<dbReference type="GO" id="GO:0006508">
    <property type="term" value="P:proteolysis"/>
    <property type="evidence" value="ECO:0007669"/>
    <property type="project" value="UniProtKB-KW"/>
</dbReference>
<dbReference type="GO" id="GO:0032196">
    <property type="term" value="P:transposition"/>
    <property type="evidence" value="ECO:0007669"/>
    <property type="project" value="UniProtKB-KW"/>
</dbReference>
<dbReference type="GO" id="GO:0075523">
    <property type="term" value="P:viral translational frameshifting"/>
    <property type="evidence" value="ECO:0007669"/>
    <property type="project" value="UniProtKB-KW"/>
</dbReference>
<dbReference type="CDD" id="cd09272">
    <property type="entry name" value="RNase_HI_RT_Ty1"/>
    <property type="match status" value="1"/>
</dbReference>
<dbReference type="FunFam" id="3.30.420.10:FF:000050">
    <property type="entry name" value="Transposon Ty2-DR3 Gag-Pol polyprotein"/>
    <property type="match status" value="1"/>
</dbReference>
<dbReference type="Gene3D" id="3.30.420.10">
    <property type="entry name" value="Ribonuclease H-like superfamily/Ribonuclease H"/>
    <property type="match status" value="1"/>
</dbReference>
<dbReference type="InterPro" id="IPR001969">
    <property type="entry name" value="Aspartic_peptidase_AS"/>
</dbReference>
<dbReference type="InterPro" id="IPR043502">
    <property type="entry name" value="DNA/RNA_pol_sf"/>
</dbReference>
<dbReference type="InterPro" id="IPR001584">
    <property type="entry name" value="Integrase_cat-core"/>
</dbReference>
<dbReference type="InterPro" id="IPR039537">
    <property type="entry name" value="Retrotran_Ty1/copia-like"/>
</dbReference>
<dbReference type="InterPro" id="IPR012337">
    <property type="entry name" value="RNaseH-like_sf"/>
</dbReference>
<dbReference type="InterPro" id="IPR036397">
    <property type="entry name" value="RNaseH_sf"/>
</dbReference>
<dbReference type="InterPro" id="IPR013103">
    <property type="entry name" value="RVT_2"/>
</dbReference>
<dbReference type="InterPro" id="IPR015820">
    <property type="entry name" value="TYA"/>
</dbReference>
<dbReference type="PANTHER" id="PTHR42648">
    <property type="entry name" value="TRANSPOSASE, PUTATIVE-RELATED"/>
    <property type="match status" value="1"/>
</dbReference>
<dbReference type="PANTHER" id="PTHR42648:SF11">
    <property type="entry name" value="TRANSPOSON TY4-P GAG-POL POLYPROTEIN"/>
    <property type="match status" value="1"/>
</dbReference>
<dbReference type="Pfam" id="PF00665">
    <property type="entry name" value="rve"/>
    <property type="match status" value="1"/>
</dbReference>
<dbReference type="Pfam" id="PF07727">
    <property type="entry name" value="RVT_2"/>
    <property type="match status" value="1"/>
</dbReference>
<dbReference type="Pfam" id="PF01021">
    <property type="entry name" value="TYA"/>
    <property type="match status" value="1"/>
</dbReference>
<dbReference type="SUPFAM" id="SSF56672">
    <property type="entry name" value="DNA/RNA polymerases"/>
    <property type="match status" value="1"/>
</dbReference>
<dbReference type="SUPFAM" id="SSF53098">
    <property type="entry name" value="Ribonuclease H-like"/>
    <property type="match status" value="1"/>
</dbReference>
<dbReference type="PROSITE" id="PS00141">
    <property type="entry name" value="ASP_PROTEASE"/>
    <property type="match status" value="1"/>
</dbReference>
<dbReference type="PROSITE" id="PS50994">
    <property type="entry name" value="INTEGRASE"/>
    <property type="match status" value="1"/>
</dbReference>
<accession>Q12490</accession>
<accession>D6VPZ6</accession>